<reference key="1">
    <citation type="journal article" date="2008" name="BMC Genomics">
        <title>The genome sequence of the fish pathogen Aliivibrio salmonicida strain LFI1238 shows extensive evidence of gene decay.</title>
        <authorList>
            <person name="Hjerde E."/>
            <person name="Lorentzen M.S."/>
            <person name="Holden M.T."/>
            <person name="Seeger K."/>
            <person name="Paulsen S."/>
            <person name="Bason N."/>
            <person name="Churcher C."/>
            <person name="Harris D."/>
            <person name="Norbertczak H."/>
            <person name="Quail M.A."/>
            <person name="Sanders S."/>
            <person name="Thurston S."/>
            <person name="Parkhill J."/>
            <person name="Willassen N.P."/>
            <person name="Thomson N.R."/>
        </authorList>
    </citation>
    <scope>NUCLEOTIDE SEQUENCE [LARGE SCALE GENOMIC DNA]</scope>
    <source>
        <strain>LFI1238</strain>
    </source>
</reference>
<dbReference type="EMBL" id="FM178379">
    <property type="protein sequence ID" value="CAQ79833.1"/>
    <property type="molecule type" value="Genomic_DNA"/>
</dbReference>
<dbReference type="RefSeq" id="WP_012550674.1">
    <property type="nucleotide sequence ID" value="NC_011312.1"/>
</dbReference>
<dbReference type="SMR" id="B6EIG5"/>
<dbReference type="KEGG" id="vsa:VSAL_I2148"/>
<dbReference type="eggNOG" id="COG3067">
    <property type="taxonomic scope" value="Bacteria"/>
</dbReference>
<dbReference type="HOGENOM" id="CLU_041110_0_0_6"/>
<dbReference type="Proteomes" id="UP000001730">
    <property type="component" value="Chromosome 1"/>
</dbReference>
<dbReference type="GO" id="GO:0005886">
    <property type="term" value="C:plasma membrane"/>
    <property type="evidence" value="ECO:0007669"/>
    <property type="project" value="UniProtKB-SubCell"/>
</dbReference>
<dbReference type="GO" id="GO:0015385">
    <property type="term" value="F:sodium:proton antiporter activity"/>
    <property type="evidence" value="ECO:0007669"/>
    <property type="project" value="InterPro"/>
</dbReference>
<dbReference type="HAMAP" id="MF_01599">
    <property type="entry name" value="NhaB"/>
    <property type="match status" value="1"/>
</dbReference>
<dbReference type="InterPro" id="IPR004671">
    <property type="entry name" value="Na+/H+_antiporter_NhaB"/>
</dbReference>
<dbReference type="NCBIfam" id="TIGR00774">
    <property type="entry name" value="NhaB"/>
    <property type="match status" value="1"/>
</dbReference>
<dbReference type="NCBIfam" id="NF007093">
    <property type="entry name" value="PRK09547.1"/>
    <property type="match status" value="1"/>
</dbReference>
<dbReference type="PANTHER" id="PTHR43302:SF1">
    <property type="entry name" value="NA(+)_H(+) ANTIPORTER NHAB"/>
    <property type="match status" value="1"/>
</dbReference>
<dbReference type="PANTHER" id="PTHR43302">
    <property type="entry name" value="TRANSPORTER ARSB-RELATED"/>
    <property type="match status" value="1"/>
</dbReference>
<dbReference type="Pfam" id="PF06450">
    <property type="entry name" value="NhaB"/>
    <property type="match status" value="1"/>
</dbReference>
<feature type="chain" id="PRO_1000191534" description="Na(+)/H(+) antiporter NhaB">
    <location>
        <begin position="1"/>
        <end position="531"/>
    </location>
</feature>
<feature type="transmembrane region" description="Helical" evidence="1">
    <location>
        <begin position="13"/>
        <end position="33"/>
    </location>
</feature>
<feature type="transmembrane region" description="Helical" evidence="1">
    <location>
        <begin position="34"/>
        <end position="54"/>
    </location>
</feature>
<feature type="transmembrane region" description="Helical" evidence="1">
    <location>
        <begin position="90"/>
        <end position="110"/>
    </location>
</feature>
<feature type="transmembrane region" description="Helical" evidence="1">
    <location>
        <begin position="121"/>
        <end position="141"/>
    </location>
</feature>
<feature type="transmembrane region" description="Helical" evidence="1">
    <location>
        <begin position="145"/>
        <end position="165"/>
    </location>
</feature>
<feature type="transmembrane region" description="Helical" evidence="1">
    <location>
        <begin position="206"/>
        <end position="226"/>
    </location>
</feature>
<feature type="transmembrane region" description="Helical" evidence="1">
    <location>
        <begin position="242"/>
        <end position="262"/>
    </location>
</feature>
<feature type="transmembrane region" description="Helical" evidence="1">
    <location>
        <begin position="308"/>
        <end position="328"/>
    </location>
</feature>
<feature type="transmembrane region" description="Helical" evidence="1">
    <location>
        <begin position="352"/>
        <end position="372"/>
    </location>
</feature>
<feature type="transmembrane region" description="Helical" evidence="1">
    <location>
        <begin position="394"/>
        <end position="414"/>
    </location>
</feature>
<feature type="transmembrane region" description="Helical" evidence="1">
    <location>
        <begin position="456"/>
        <end position="476"/>
    </location>
</feature>
<feature type="transmembrane region" description="Helical" evidence="1">
    <location>
        <begin position="482"/>
        <end position="502"/>
    </location>
</feature>
<name>NHAB_ALISL</name>
<keyword id="KW-0050">Antiport</keyword>
<keyword id="KW-0997">Cell inner membrane</keyword>
<keyword id="KW-1003">Cell membrane</keyword>
<keyword id="KW-0406">Ion transport</keyword>
<keyword id="KW-0472">Membrane</keyword>
<keyword id="KW-0915">Sodium</keyword>
<keyword id="KW-0739">Sodium transport</keyword>
<keyword id="KW-0812">Transmembrane</keyword>
<keyword id="KW-1133">Transmembrane helix</keyword>
<keyword id="KW-0813">Transport</keyword>
<sequence length="531" mass="57533">MSISLGNAFIKNFLGKAPDWYKIAIISFLIINPLVFFFVDPFAAGWLLVVEFIFTLAMALKCYPLQPGGLLAIQAIAIGMTSAEQVKHELVANIEVLLLLVFMVAGIYFMKQLLLFIFTKILIGIKSKTALSVAFCFTAAFLSAFLDALTVIAVVISVAVGFYAIYHRVASGQGGTPSHDHTCDSNVTDELSRDDLENYRAFLRSLLMHAGVGTALGGVMTMVGEPQNLIIADQANWMFGEFIIRMLPVTAPVFICGLLTCVVVEKLGICGYGAKLPENVRNILEEYESEERKNRTNIDNAKLIIQSVIAVWLIVALAMHLAAVGLIGLSVIILATAFTGVIEEHAMGKAFEEALPFTALLAVFFAIVAVIIDQELFKPIIDAVLAVEDKSSQLALFYVANGILSMVSDNVFVGTVYINEVKTALLDGVITRDQFDLLAVAINTGTNLPSVATPNGQAAFLFLLTSALAPLIQLSYGRMVWMALPYTIVLALVGLFGISFLLEPMTTMFYDFGWITHGTIEAATNAVSSGH</sequence>
<protein>
    <recommendedName>
        <fullName evidence="1">Na(+)/H(+) antiporter NhaB</fullName>
    </recommendedName>
    <alternativeName>
        <fullName evidence="1">Sodium/proton antiporter NhaB</fullName>
    </alternativeName>
</protein>
<proteinExistence type="inferred from homology"/>
<evidence type="ECO:0000255" key="1">
    <source>
        <dbReference type="HAMAP-Rule" id="MF_01599"/>
    </source>
</evidence>
<accession>B6EIG5</accession>
<gene>
    <name evidence="1" type="primary">nhaB</name>
    <name type="ordered locus">VSAL_I2148</name>
</gene>
<organism>
    <name type="scientific">Aliivibrio salmonicida (strain LFI1238)</name>
    <name type="common">Vibrio salmonicida (strain LFI1238)</name>
    <dbReference type="NCBI Taxonomy" id="316275"/>
    <lineage>
        <taxon>Bacteria</taxon>
        <taxon>Pseudomonadati</taxon>
        <taxon>Pseudomonadota</taxon>
        <taxon>Gammaproteobacteria</taxon>
        <taxon>Vibrionales</taxon>
        <taxon>Vibrionaceae</taxon>
        <taxon>Aliivibrio</taxon>
    </lineage>
</organism>
<comment type="function">
    <text evidence="1">Na(+)/H(+) antiporter that extrudes sodium in exchange for external protons.</text>
</comment>
<comment type="catalytic activity">
    <reaction evidence="1">
        <text>2 Na(+)(in) + 3 H(+)(out) = 2 Na(+)(out) + 3 H(+)(in)</text>
        <dbReference type="Rhea" id="RHEA:29247"/>
        <dbReference type="ChEBI" id="CHEBI:15378"/>
        <dbReference type="ChEBI" id="CHEBI:29101"/>
    </reaction>
    <physiologicalReaction direction="left-to-right" evidence="1">
        <dbReference type="Rhea" id="RHEA:29248"/>
    </physiologicalReaction>
</comment>
<comment type="subcellular location">
    <subcellularLocation>
        <location evidence="1">Cell inner membrane</location>
        <topology evidence="1">Multi-pass membrane protein</topology>
    </subcellularLocation>
</comment>
<comment type="similarity">
    <text evidence="1">Belongs to the NhaB Na(+)/H(+) (TC 2.A.34) antiporter family.</text>
</comment>